<accession>B7IS39</accession>
<comment type="function">
    <text evidence="1">May play a role in DNA repair. It seems to be involved in an RecBC-independent recombinational process of DNA repair. It may act with RecF and RecO.</text>
</comment>
<comment type="similarity">
    <text evidence="1">Belongs to the RecR family.</text>
</comment>
<feature type="chain" id="PRO_1000195363" description="Recombination protein RecR">
    <location>
        <begin position="1"/>
        <end position="198"/>
    </location>
</feature>
<feature type="domain" description="Toprim" evidence="1">
    <location>
        <begin position="80"/>
        <end position="175"/>
    </location>
</feature>
<feature type="zinc finger region" description="C4-type" evidence="1">
    <location>
        <begin position="57"/>
        <end position="72"/>
    </location>
</feature>
<reference key="1">
    <citation type="submission" date="2008-10" db="EMBL/GenBank/DDBJ databases">
        <title>Genome sequence of Bacillus cereus G9842.</title>
        <authorList>
            <person name="Dodson R.J."/>
            <person name="Durkin A.S."/>
            <person name="Rosovitz M.J."/>
            <person name="Rasko D.A."/>
            <person name="Hoffmaster A."/>
            <person name="Ravel J."/>
            <person name="Sutton G."/>
        </authorList>
    </citation>
    <scope>NUCLEOTIDE SEQUENCE [LARGE SCALE GENOMIC DNA]</scope>
    <source>
        <strain>G9842</strain>
    </source>
</reference>
<sequence>MHYPEPISKLIDSFMKLPGIGPKTAVRLAFFVLDMKEDDVLGFAKALVNAKRDLAYCSVCGHITDRDPCYICNDSHRDQSVVCVVQEPKDVIAMEKMKEYQGVYHVLRGAISPMEGIGPEDINIPQLLKRLHDETVQEVILATNPNIEGEATAMYISRLLKPTGIKVTRIAHGLPVGGDLEYADEVTLSKALEGRREV</sequence>
<keyword id="KW-0227">DNA damage</keyword>
<keyword id="KW-0233">DNA recombination</keyword>
<keyword id="KW-0234">DNA repair</keyword>
<keyword id="KW-0479">Metal-binding</keyword>
<keyword id="KW-0862">Zinc</keyword>
<keyword id="KW-0863">Zinc-finger</keyword>
<proteinExistence type="inferred from homology"/>
<protein>
    <recommendedName>
        <fullName evidence="1">Recombination protein RecR</fullName>
    </recommendedName>
</protein>
<evidence type="ECO:0000255" key="1">
    <source>
        <dbReference type="HAMAP-Rule" id="MF_00017"/>
    </source>
</evidence>
<gene>
    <name evidence="1" type="primary">recR</name>
    <name type="ordered locus">BCG9842_B5292</name>
</gene>
<organism>
    <name type="scientific">Bacillus cereus (strain G9842)</name>
    <dbReference type="NCBI Taxonomy" id="405531"/>
    <lineage>
        <taxon>Bacteria</taxon>
        <taxon>Bacillati</taxon>
        <taxon>Bacillota</taxon>
        <taxon>Bacilli</taxon>
        <taxon>Bacillales</taxon>
        <taxon>Bacillaceae</taxon>
        <taxon>Bacillus</taxon>
        <taxon>Bacillus cereus group</taxon>
    </lineage>
</organism>
<name>RECR_BACC2</name>
<dbReference type="EMBL" id="CP001186">
    <property type="protein sequence ID" value="ACK96249.1"/>
    <property type="molecule type" value="Genomic_DNA"/>
</dbReference>
<dbReference type="RefSeq" id="WP_000559169.1">
    <property type="nucleotide sequence ID" value="NC_011772.1"/>
</dbReference>
<dbReference type="SMR" id="B7IS39"/>
<dbReference type="GeneID" id="93011050"/>
<dbReference type="KEGG" id="bcg:BCG9842_B5292"/>
<dbReference type="HOGENOM" id="CLU_060739_1_0_9"/>
<dbReference type="Proteomes" id="UP000006744">
    <property type="component" value="Chromosome"/>
</dbReference>
<dbReference type="GO" id="GO:0003677">
    <property type="term" value="F:DNA binding"/>
    <property type="evidence" value="ECO:0007669"/>
    <property type="project" value="UniProtKB-UniRule"/>
</dbReference>
<dbReference type="GO" id="GO:0008270">
    <property type="term" value="F:zinc ion binding"/>
    <property type="evidence" value="ECO:0007669"/>
    <property type="project" value="UniProtKB-KW"/>
</dbReference>
<dbReference type="GO" id="GO:0006310">
    <property type="term" value="P:DNA recombination"/>
    <property type="evidence" value="ECO:0007669"/>
    <property type="project" value="UniProtKB-UniRule"/>
</dbReference>
<dbReference type="GO" id="GO:0006281">
    <property type="term" value="P:DNA repair"/>
    <property type="evidence" value="ECO:0007669"/>
    <property type="project" value="UniProtKB-UniRule"/>
</dbReference>
<dbReference type="CDD" id="cd01025">
    <property type="entry name" value="TOPRIM_recR"/>
    <property type="match status" value="1"/>
</dbReference>
<dbReference type="Gene3D" id="3.30.60.80">
    <property type="match status" value="1"/>
</dbReference>
<dbReference type="Gene3D" id="3.40.1360.10">
    <property type="match status" value="1"/>
</dbReference>
<dbReference type="Gene3D" id="6.10.250.240">
    <property type="match status" value="1"/>
</dbReference>
<dbReference type="Gene3D" id="1.10.8.420">
    <property type="entry name" value="RecR Domain 1"/>
    <property type="match status" value="1"/>
</dbReference>
<dbReference type="HAMAP" id="MF_00017">
    <property type="entry name" value="RecR"/>
    <property type="match status" value="1"/>
</dbReference>
<dbReference type="InterPro" id="IPR000093">
    <property type="entry name" value="DNA_Rcmb_RecR"/>
</dbReference>
<dbReference type="InterPro" id="IPR023627">
    <property type="entry name" value="Rcmb_RecR"/>
</dbReference>
<dbReference type="InterPro" id="IPR015967">
    <property type="entry name" value="Rcmb_RecR_Znf"/>
</dbReference>
<dbReference type="InterPro" id="IPR006171">
    <property type="entry name" value="TOPRIM_dom"/>
</dbReference>
<dbReference type="InterPro" id="IPR034137">
    <property type="entry name" value="TOPRIM_RecR"/>
</dbReference>
<dbReference type="NCBIfam" id="TIGR00615">
    <property type="entry name" value="recR"/>
    <property type="match status" value="1"/>
</dbReference>
<dbReference type="PANTHER" id="PTHR30446">
    <property type="entry name" value="RECOMBINATION PROTEIN RECR"/>
    <property type="match status" value="1"/>
</dbReference>
<dbReference type="PANTHER" id="PTHR30446:SF0">
    <property type="entry name" value="RECOMBINATION PROTEIN RECR"/>
    <property type="match status" value="1"/>
</dbReference>
<dbReference type="Pfam" id="PF21175">
    <property type="entry name" value="RecR_C"/>
    <property type="match status" value="1"/>
</dbReference>
<dbReference type="Pfam" id="PF21176">
    <property type="entry name" value="RecR_HhH"/>
    <property type="match status" value="1"/>
</dbReference>
<dbReference type="Pfam" id="PF02132">
    <property type="entry name" value="RecR_ZnF"/>
    <property type="match status" value="1"/>
</dbReference>
<dbReference type="Pfam" id="PF13662">
    <property type="entry name" value="Toprim_4"/>
    <property type="match status" value="1"/>
</dbReference>
<dbReference type="SMART" id="SM00493">
    <property type="entry name" value="TOPRIM"/>
    <property type="match status" value="1"/>
</dbReference>
<dbReference type="SUPFAM" id="SSF111304">
    <property type="entry name" value="Recombination protein RecR"/>
    <property type="match status" value="1"/>
</dbReference>
<dbReference type="PROSITE" id="PS01300">
    <property type="entry name" value="RECR"/>
    <property type="match status" value="1"/>
</dbReference>
<dbReference type="PROSITE" id="PS50880">
    <property type="entry name" value="TOPRIM"/>
    <property type="match status" value="1"/>
</dbReference>